<feature type="chain" id="PRO_1000149543" description="UPF0223 protein BAMEG_4214">
    <location>
        <begin position="1"/>
        <end position="89"/>
    </location>
</feature>
<name>Y4214_BACAC</name>
<dbReference type="EMBL" id="CP001215">
    <property type="protein sequence ID" value="ACP17149.1"/>
    <property type="molecule type" value="Genomic_DNA"/>
</dbReference>
<dbReference type="RefSeq" id="WP_000456560.1">
    <property type="nucleotide sequence ID" value="NC_012581.1"/>
</dbReference>
<dbReference type="SMR" id="C3LI27"/>
<dbReference type="KEGG" id="bah:BAMEG_4214"/>
<dbReference type="HOGENOM" id="CLU_166693_0_0_9"/>
<dbReference type="Gene3D" id="1.10.220.80">
    <property type="entry name" value="BH2638-like"/>
    <property type="match status" value="1"/>
</dbReference>
<dbReference type="HAMAP" id="MF_01041">
    <property type="entry name" value="UPF0223"/>
    <property type="match status" value="1"/>
</dbReference>
<dbReference type="InterPro" id="IPR023324">
    <property type="entry name" value="BH2638-like_sf"/>
</dbReference>
<dbReference type="InterPro" id="IPR007920">
    <property type="entry name" value="UPF0223"/>
</dbReference>
<dbReference type="NCBIfam" id="NF003353">
    <property type="entry name" value="PRK04387.1"/>
    <property type="match status" value="1"/>
</dbReference>
<dbReference type="Pfam" id="PF05256">
    <property type="entry name" value="UPF0223"/>
    <property type="match status" value="1"/>
</dbReference>
<dbReference type="PIRSF" id="PIRSF037260">
    <property type="entry name" value="UPF0223"/>
    <property type="match status" value="1"/>
</dbReference>
<dbReference type="SUPFAM" id="SSF158504">
    <property type="entry name" value="BH2638-like"/>
    <property type="match status" value="1"/>
</dbReference>
<accession>C3LI27</accession>
<proteinExistence type="inferred from homology"/>
<sequence length="89" mass="10859">MEYQYPLDYDWSNEEMVTMVKFYEAIEKAYEKGIIREELMGLYRRFKEIVPSKAEEKKIDKEFQEVSGYSIYRAIQRAKEIEEQKLVKM</sequence>
<reference key="1">
    <citation type="submission" date="2008-10" db="EMBL/GenBank/DDBJ databases">
        <title>Genome sequence of Bacillus anthracis str. CDC 684.</title>
        <authorList>
            <person name="Dodson R.J."/>
            <person name="Munk A.C."/>
            <person name="Brettin T."/>
            <person name="Bruce D."/>
            <person name="Detter C."/>
            <person name="Tapia R."/>
            <person name="Han C."/>
            <person name="Sutton G."/>
            <person name="Sims D."/>
        </authorList>
    </citation>
    <scope>NUCLEOTIDE SEQUENCE [LARGE SCALE GENOMIC DNA]</scope>
    <source>
        <strain>CDC 684 / NRRL 3495</strain>
    </source>
</reference>
<gene>
    <name type="ordered locus">BAMEG_4214</name>
</gene>
<evidence type="ECO:0000255" key="1">
    <source>
        <dbReference type="HAMAP-Rule" id="MF_01041"/>
    </source>
</evidence>
<organism>
    <name type="scientific">Bacillus anthracis (strain CDC 684 / NRRL 3495)</name>
    <dbReference type="NCBI Taxonomy" id="568206"/>
    <lineage>
        <taxon>Bacteria</taxon>
        <taxon>Bacillati</taxon>
        <taxon>Bacillota</taxon>
        <taxon>Bacilli</taxon>
        <taxon>Bacillales</taxon>
        <taxon>Bacillaceae</taxon>
        <taxon>Bacillus</taxon>
        <taxon>Bacillus cereus group</taxon>
    </lineage>
</organism>
<comment type="similarity">
    <text evidence="1">Belongs to the UPF0223 family.</text>
</comment>
<protein>
    <recommendedName>
        <fullName evidence="1">UPF0223 protein BAMEG_4214</fullName>
    </recommendedName>
</protein>